<sequence>MDSTLTAREIRERFINYFKRNEHTYVHSSATIPLDDPTLLFANAGMNQFKPIFLNTVDPSHPMAKLSRAANTQKCIRAGGKHNDLDDVGKDVYHHTFFEMLGSWSFGDYFKELACKMALELLTQEFGIPVERLYVTYFGGDEAAGLEPDLECRQIWQNLGLDEAKILPGNMKDNFWEMGDTGPCGPCSEIHYDRIGGRDAAHLVNQDDPNVLEIWNLVFIQYNRESDGVLKPLPKKSIDTGMGLERLVSVLQNKMSNYDTDLFVPYFEAIQKGTGARPYTGKVGAEDTDGIDMAYRVLADHARTITVALADGGRPDNTGRGYVLRRILRRAVRYSHEKLNASRGFFATLVDVVVQSLGDAFPELKKDPDMVKDIINEEEVQFLKTLSRGRRILDRKIQSLGDCQTIPGDTAWLLYDTYGFPVDLTGLIAEEKGLVVDMDGFEEERKLAQLKSQGKGAGGEDLIMLDIYAIEELRAKGLEATDDSPKYNYHSDSSGSYVFECTVATVLALRREKMFVDEVVTGQECGVVLDKTCFYAEQGGQIFDEGYLVKVDDSSEDKTEFTVKNAQVRGGYVLHIGTIYGNLRVGDQVRLFIDEPRRRPVMSNHTATHILNFALRSVLGDADQKGSLVAPDRLRFDFTAKGAMSTEQIKKTEEIVNGMIEAAKPVYTLDCPLAAAKAIQGLRAVFDETYPDPVRVVSIGVPVSELLDDPSGPAGSLTSVEFCGGTHLRNSSHAGAFVIVTEEAIAKGIRRIVAVTGAEAQKALRKSETLKKSLSAMEVKVKAQSAPNKDVQKEIADLGEVLATAVIPQWQKDEQRETLKSLKKVMDDLDRASKADVQKRVLEKTKQLIDSNPNQPLVILEMESGASAKALNEALKLFKTHSPQTSAMLFTVDNEAGKITCLCQVPQNAANRGLKASEWVQQVSGLMDGKGGGKDMSAQATGKNVGCLQEALQLATSFAQLRLGDVKN</sequence>
<gene>
    <name type="primary">Aars1</name>
    <name type="synonym">Aars</name>
</gene>
<keyword id="KW-0007">Acetylation</keyword>
<keyword id="KW-0030">Aminoacyl-tRNA synthetase</keyword>
<keyword id="KW-0067">ATP-binding</keyword>
<keyword id="KW-0963">Cytoplasm</keyword>
<keyword id="KW-0903">Direct protein sequencing</keyword>
<keyword id="KW-0436">Ligase</keyword>
<keyword id="KW-0479">Metal-binding</keyword>
<keyword id="KW-0488">Methylation</keyword>
<keyword id="KW-0547">Nucleotide-binding</keyword>
<keyword id="KW-0539">Nucleus</keyword>
<keyword id="KW-0597">Phosphoprotein</keyword>
<keyword id="KW-0648">Protein biosynthesis</keyword>
<keyword id="KW-1185">Reference proteome</keyword>
<keyword id="KW-0694">RNA-binding</keyword>
<keyword id="KW-0820">tRNA-binding</keyword>
<keyword id="KW-0832">Ubl conjugation</keyword>
<keyword id="KW-0862">Zinc</keyword>
<name>SYAC_RAT</name>
<proteinExistence type="evidence at protein level"/>
<reference key="1">
    <citation type="submission" date="2005-07" db="EMBL/GenBank/DDBJ databases">
        <authorList>
            <person name="Mural R.J."/>
            <person name="Adams M.D."/>
            <person name="Myers E.W."/>
            <person name="Smith H.O."/>
            <person name="Venter J.C."/>
        </authorList>
    </citation>
    <scope>NUCLEOTIDE SEQUENCE [LARGE SCALE GENOMIC DNA]</scope>
</reference>
<reference key="2">
    <citation type="journal article" date="1991" name="Eur. J. Biochem.">
        <title>Alanyl-tRNA synthetase from Escherichia coli, Bombyx mori and Ratus ratus. Existence of common structural features.</title>
        <authorList>
            <person name="Dignam J.D."/>
            <person name="Dignam S.S."/>
            <person name="Brumley L.L."/>
        </authorList>
    </citation>
    <scope>PROTEIN SEQUENCE OF 456-476</scope>
    <source>
        <tissue>Liver</tissue>
    </source>
</reference>
<reference key="3">
    <citation type="journal article" date="2004" name="Genome Res.">
        <title>The status, quality, and expansion of the NIH full-length cDNA project: the Mammalian Gene Collection (MGC).</title>
        <authorList>
            <consortium name="The MGC Project Team"/>
        </authorList>
    </citation>
    <scope>NUCLEOTIDE SEQUENCE [LARGE SCALE MRNA] OF 600-968</scope>
    <source>
        <tissue>Thymus</tissue>
    </source>
</reference>
<reference key="4">
    <citation type="submission" date="2009-01" db="UniProtKB">
        <authorList>
            <person name="Maurya D.K."/>
            <person name="Bhargava P."/>
        </authorList>
    </citation>
    <scope>IDENTIFICATION BY MASS SPECTROMETRY</scope>
</reference>
<dbReference type="EC" id="6.1.1.7" evidence="2"/>
<dbReference type="EC" id="6.-.-.-" evidence="2"/>
<dbReference type="EMBL" id="CH473972">
    <property type="protein sequence ID" value="EDL92558.1"/>
    <property type="molecule type" value="Genomic_DNA"/>
</dbReference>
<dbReference type="EMBL" id="BC098738">
    <property type="protein sequence ID" value="AAH98738.1"/>
    <property type="molecule type" value="mRNA"/>
</dbReference>
<dbReference type="PIR" id="S16073">
    <property type="entry name" value="S16073"/>
</dbReference>
<dbReference type="RefSeq" id="NP_001093987.1">
    <property type="nucleotide sequence ID" value="NM_001100517.2"/>
</dbReference>
<dbReference type="RefSeq" id="NP_001421343.1">
    <property type="nucleotide sequence ID" value="NM_001434414.1"/>
</dbReference>
<dbReference type="RefSeq" id="NP_001421344.1">
    <property type="nucleotide sequence ID" value="NM_001434415.1"/>
</dbReference>
<dbReference type="RefSeq" id="NP_001421345.1">
    <property type="nucleotide sequence ID" value="NM_001434416.1"/>
</dbReference>
<dbReference type="RefSeq" id="XP_006255642.1">
    <property type="nucleotide sequence ID" value="XM_006255580.3"/>
</dbReference>
<dbReference type="RefSeq" id="XP_006255643.1">
    <property type="nucleotide sequence ID" value="XM_006255581.2"/>
</dbReference>
<dbReference type="RefSeq" id="XP_006255644.1">
    <property type="nucleotide sequence ID" value="XM_006255582.3"/>
</dbReference>
<dbReference type="RefSeq" id="XP_006255645.1">
    <property type="nucleotide sequence ID" value="XM_006255583.5"/>
</dbReference>
<dbReference type="RefSeq" id="XP_063134010.1">
    <property type="nucleotide sequence ID" value="XM_063277940.1"/>
</dbReference>
<dbReference type="RefSeq" id="XP_063134011.1">
    <property type="nucleotide sequence ID" value="XM_063277941.1"/>
</dbReference>
<dbReference type="SMR" id="P50475"/>
<dbReference type="FunCoup" id="P50475">
    <property type="interactions" value="2806"/>
</dbReference>
<dbReference type="IntAct" id="P50475">
    <property type="interactions" value="1"/>
</dbReference>
<dbReference type="STRING" id="10116.ENSRNOP00000075266"/>
<dbReference type="iPTMnet" id="P50475"/>
<dbReference type="PhosphoSitePlus" id="P50475"/>
<dbReference type="jPOST" id="P50475"/>
<dbReference type="PaxDb" id="10116-ENSRNOP00000025051"/>
<dbReference type="Ensembl" id="ENSRNOT00000025052.6">
    <property type="protein sequence ID" value="ENSRNOP00000025051.5"/>
    <property type="gene ID" value="ENSRNOG00000018404.8"/>
</dbReference>
<dbReference type="GeneID" id="292023"/>
<dbReference type="KEGG" id="rno:292023"/>
<dbReference type="UCSC" id="RGD:1304832">
    <property type="organism name" value="rat"/>
</dbReference>
<dbReference type="AGR" id="RGD:1304832"/>
<dbReference type="CTD" id="16"/>
<dbReference type="RGD" id="1304832">
    <property type="gene designation" value="Aars1"/>
</dbReference>
<dbReference type="eggNOG" id="KOG0188">
    <property type="taxonomic scope" value="Eukaryota"/>
</dbReference>
<dbReference type="GeneTree" id="ENSGT00940000157335"/>
<dbReference type="InParanoid" id="P50475"/>
<dbReference type="OMA" id="NKKDNFW"/>
<dbReference type="PhylomeDB" id="P50475"/>
<dbReference type="TreeFam" id="TF300737"/>
<dbReference type="PRO" id="PR:P50475"/>
<dbReference type="Proteomes" id="UP000002494">
    <property type="component" value="Chromosome 19"/>
</dbReference>
<dbReference type="Proteomes" id="UP000234681">
    <property type="component" value="Chromosome 19"/>
</dbReference>
<dbReference type="Bgee" id="ENSRNOG00000018404">
    <property type="expression patterns" value="Expressed in cerebellum and 19 other cell types or tissues"/>
</dbReference>
<dbReference type="GO" id="GO:0005737">
    <property type="term" value="C:cytoplasm"/>
    <property type="evidence" value="ECO:0000250"/>
    <property type="project" value="UniProtKB"/>
</dbReference>
<dbReference type="GO" id="GO:0005829">
    <property type="term" value="C:cytosol"/>
    <property type="evidence" value="ECO:0007669"/>
    <property type="project" value="Ensembl"/>
</dbReference>
<dbReference type="GO" id="GO:0005739">
    <property type="term" value="C:mitochondrion"/>
    <property type="evidence" value="ECO:0000318"/>
    <property type="project" value="GO_Central"/>
</dbReference>
<dbReference type="GO" id="GO:0005634">
    <property type="term" value="C:nucleus"/>
    <property type="evidence" value="ECO:0000250"/>
    <property type="project" value="UniProtKB"/>
</dbReference>
<dbReference type="GO" id="GO:0004813">
    <property type="term" value="F:alanine-tRNA ligase activity"/>
    <property type="evidence" value="ECO:0000314"/>
    <property type="project" value="RGD"/>
</dbReference>
<dbReference type="GO" id="GO:0016597">
    <property type="term" value="F:amino acid binding"/>
    <property type="evidence" value="ECO:0000353"/>
    <property type="project" value="RGD"/>
</dbReference>
<dbReference type="GO" id="GO:0002161">
    <property type="term" value="F:aminoacyl-tRNA deacylase activity"/>
    <property type="evidence" value="ECO:0000250"/>
    <property type="project" value="UniProtKB"/>
</dbReference>
<dbReference type="GO" id="GO:0005524">
    <property type="term" value="F:ATP binding"/>
    <property type="evidence" value="ECO:0000353"/>
    <property type="project" value="RGD"/>
</dbReference>
<dbReference type="GO" id="GO:0141207">
    <property type="term" value="F:peptide lactyltransferase (ATP-dependent) activity"/>
    <property type="evidence" value="ECO:0000250"/>
    <property type="project" value="UniProtKB"/>
</dbReference>
<dbReference type="GO" id="GO:0002196">
    <property type="term" value="F:Ser-tRNA(Ala) deacylase activity"/>
    <property type="evidence" value="ECO:0000250"/>
    <property type="project" value="UniProtKB"/>
</dbReference>
<dbReference type="GO" id="GO:0000049">
    <property type="term" value="F:tRNA binding"/>
    <property type="evidence" value="ECO:0000353"/>
    <property type="project" value="RGD"/>
</dbReference>
<dbReference type="GO" id="GO:0008270">
    <property type="term" value="F:zinc ion binding"/>
    <property type="evidence" value="ECO:0007669"/>
    <property type="project" value="UniProtKB-UniRule"/>
</dbReference>
<dbReference type="GO" id="GO:0006419">
    <property type="term" value="P:alanyl-tRNA aminoacylation"/>
    <property type="evidence" value="ECO:0000314"/>
    <property type="project" value="RGD"/>
</dbReference>
<dbReference type="GO" id="GO:0021680">
    <property type="term" value="P:cerebellar Purkinje cell layer development"/>
    <property type="evidence" value="ECO:0000266"/>
    <property type="project" value="RGD"/>
</dbReference>
<dbReference type="GO" id="GO:0043524">
    <property type="term" value="P:negative regulation of neuron apoptotic process"/>
    <property type="evidence" value="ECO:0000266"/>
    <property type="project" value="RGD"/>
</dbReference>
<dbReference type="GO" id="GO:1901797">
    <property type="term" value="P:negative regulation of signal transduction by p53 class mediator"/>
    <property type="evidence" value="ECO:0000250"/>
    <property type="project" value="UniProtKB"/>
</dbReference>
<dbReference type="GO" id="GO:0050905">
    <property type="term" value="P:neuromuscular process"/>
    <property type="evidence" value="ECO:0000266"/>
    <property type="project" value="RGD"/>
</dbReference>
<dbReference type="GO" id="GO:0050885">
    <property type="term" value="P:neuromuscular process controlling balance"/>
    <property type="evidence" value="ECO:0000266"/>
    <property type="project" value="RGD"/>
</dbReference>
<dbReference type="GO" id="GO:0051402">
    <property type="term" value="P:neuron apoptotic process"/>
    <property type="evidence" value="ECO:0000266"/>
    <property type="project" value="RGD"/>
</dbReference>
<dbReference type="GO" id="GO:0035332">
    <property type="term" value="P:positive regulation of hippo signaling"/>
    <property type="evidence" value="ECO:0000250"/>
    <property type="project" value="UniProtKB"/>
</dbReference>
<dbReference type="GO" id="GO:0140018">
    <property type="term" value="P:regulation of cytoplasmic translational fidelity"/>
    <property type="evidence" value="ECO:0000266"/>
    <property type="project" value="RGD"/>
</dbReference>
<dbReference type="GO" id="GO:0006400">
    <property type="term" value="P:tRNA modification"/>
    <property type="evidence" value="ECO:0000250"/>
    <property type="project" value="UniProtKB"/>
</dbReference>
<dbReference type="CDD" id="cd00673">
    <property type="entry name" value="AlaRS_core"/>
    <property type="match status" value="1"/>
</dbReference>
<dbReference type="FunFam" id="3.30.930.10:FF:000011">
    <property type="entry name" value="Alanine--tRNA ligase, cytoplasmic"/>
    <property type="match status" value="1"/>
</dbReference>
<dbReference type="FunFam" id="3.30.980.10:FF:000004">
    <property type="entry name" value="Alanine--tRNA ligase, cytoplasmic"/>
    <property type="match status" value="1"/>
</dbReference>
<dbReference type="FunFam" id="3.10.310.40:FF:000002">
    <property type="entry name" value="alanine--tRNA ligase, cytoplasmic"/>
    <property type="match status" value="1"/>
</dbReference>
<dbReference type="FunFam" id="2.40.30.130:FF:000026">
    <property type="entry name" value="Alanyl-tRNA synthetase"/>
    <property type="match status" value="1"/>
</dbReference>
<dbReference type="Gene3D" id="2.40.30.130">
    <property type="match status" value="1"/>
</dbReference>
<dbReference type="Gene3D" id="3.10.310.40">
    <property type="match status" value="1"/>
</dbReference>
<dbReference type="Gene3D" id="3.30.930.10">
    <property type="entry name" value="Bira Bifunctional Protein, Domain 2"/>
    <property type="match status" value="1"/>
</dbReference>
<dbReference type="Gene3D" id="3.30.980.10">
    <property type="entry name" value="Threonyl-trna Synthetase, Chain A, domain 2"/>
    <property type="match status" value="1"/>
</dbReference>
<dbReference type="HAMAP" id="MF_00036_B">
    <property type="entry name" value="Ala_tRNA_synth_B"/>
    <property type="match status" value="1"/>
</dbReference>
<dbReference type="InterPro" id="IPR045864">
    <property type="entry name" value="aa-tRNA-synth_II/BPL/LPL"/>
</dbReference>
<dbReference type="InterPro" id="IPR002318">
    <property type="entry name" value="Ala-tRNA-lgiase_IIc"/>
</dbReference>
<dbReference type="InterPro" id="IPR018162">
    <property type="entry name" value="Ala-tRNA-ligase_IIc_anticod-bd"/>
</dbReference>
<dbReference type="InterPro" id="IPR018165">
    <property type="entry name" value="Ala-tRNA-synth_IIc_core"/>
</dbReference>
<dbReference type="InterPro" id="IPR018164">
    <property type="entry name" value="Ala-tRNA-synth_IIc_N"/>
</dbReference>
<dbReference type="InterPro" id="IPR050058">
    <property type="entry name" value="Ala-tRNA_ligase"/>
</dbReference>
<dbReference type="InterPro" id="IPR023033">
    <property type="entry name" value="Ala_tRNA_ligase_euk/bac"/>
</dbReference>
<dbReference type="InterPro" id="IPR003156">
    <property type="entry name" value="DHHA1_dom"/>
</dbReference>
<dbReference type="InterPro" id="IPR018163">
    <property type="entry name" value="Thr/Ala-tRNA-synth_IIc_edit"/>
</dbReference>
<dbReference type="InterPro" id="IPR009000">
    <property type="entry name" value="Transl_B-barrel_sf"/>
</dbReference>
<dbReference type="InterPro" id="IPR012947">
    <property type="entry name" value="tRNA_SAD"/>
</dbReference>
<dbReference type="NCBIfam" id="TIGR00344">
    <property type="entry name" value="alaS"/>
    <property type="match status" value="1"/>
</dbReference>
<dbReference type="PANTHER" id="PTHR11777:SF36">
    <property type="entry name" value="ALANINE--TRNA LIGASE, CYTOPLASMIC"/>
    <property type="match status" value="1"/>
</dbReference>
<dbReference type="PANTHER" id="PTHR11777">
    <property type="entry name" value="ALANYL-TRNA SYNTHETASE"/>
    <property type="match status" value="1"/>
</dbReference>
<dbReference type="Pfam" id="PF02272">
    <property type="entry name" value="DHHA1"/>
    <property type="match status" value="1"/>
</dbReference>
<dbReference type="Pfam" id="PF01411">
    <property type="entry name" value="tRNA-synt_2c"/>
    <property type="match status" value="1"/>
</dbReference>
<dbReference type="Pfam" id="PF07973">
    <property type="entry name" value="tRNA_SAD"/>
    <property type="match status" value="1"/>
</dbReference>
<dbReference type="PRINTS" id="PR00980">
    <property type="entry name" value="TRNASYNTHALA"/>
</dbReference>
<dbReference type="SMART" id="SM00863">
    <property type="entry name" value="tRNA_SAD"/>
    <property type="match status" value="1"/>
</dbReference>
<dbReference type="SUPFAM" id="SSF55681">
    <property type="entry name" value="Class II aaRS and biotin synthetases"/>
    <property type="match status" value="1"/>
</dbReference>
<dbReference type="SUPFAM" id="SSF101353">
    <property type="entry name" value="Putative anticodon-binding domain of alanyl-tRNA synthetase (AlaRS)"/>
    <property type="match status" value="1"/>
</dbReference>
<dbReference type="SUPFAM" id="SSF55186">
    <property type="entry name" value="ThrRS/AlaRS common domain"/>
    <property type="match status" value="1"/>
</dbReference>
<dbReference type="SUPFAM" id="SSF50447">
    <property type="entry name" value="Translation proteins"/>
    <property type="match status" value="1"/>
</dbReference>
<dbReference type="PROSITE" id="PS50860">
    <property type="entry name" value="AA_TRNA_LIGASE_II_ALA"/>
    <property type="match status" value="1"/>
</dbReference>
<feature type="chain" id="PRO_0000075284" description="Alanine--tRNA ligase, cytoplasmic">
    <location>
        <begin position="1"/>
        <end position="968"/>
    </location>
</feature>
<feature type="short sequence motif" description="Nuclear localization signal" evidence="2">
    <location>
        <begin position="750"/>
        <end position="763"/>
    </location>
</feature>
<feature type="binding site" evidence="1">
    <location>
        <position position="77"/>
    </location>
    <ligand>
        <name>ATP</name>
        <dbReference type="ChEBI" id="CHEBI:30616"/>
    </ligand>
</feature>
<feature type="binding site" evidence="1">
    <location>
        <position position="95"/>
    </location>
    <ligand>
        <name>ATP</name>
        <dbReference type="ChEBI" id="CHEBI:30616"/>
    </ligand>
</feature>
<feature type="binding site" evidence="1">
    <location>
        <position position="176"/>
    </location>
    <ligand>
        <name>ATP</name>
        <dbReference type="ChEBI" id="CHEBI:30616"/>
    </ligand>
</feature>
<feature type="binding site" evidence="1">
    <location>
        <begin position="214"/>
        <end position="216"/>
    </location>
    <ligand>
        <name>ATP</name>
        <dbReference type="ChEBI" id="CHEBI:30616"/>
    </ligand>
</feature>
<feature type="binding site" evidence="1">
    <location>
        <position position="216"/>
    </location>
    <ligand>
        <name>L-alanine</name>
        <dbReference type="ChEBI" id="CHEBI:57972"/>
    </ligand>
</feature>
<feature type="binding site" evidence="1">
    <location>
        <position position="239"/>
    </location>
    <ligand>
        <name>L-alanine</name>
        <dbReference type="ChEBI" id="CHEBI:57972"/>
    </ligand>
</feature>
<feature type="binding site" evidence="1">
    <location>
        <position position="243"/>
    </location>
    <ligand>
        <name>ATP</name>
        <dbReference type="ChEBI" id="CHEBI:30616"/>
    </ligand>
</feature>
<feature type="binding site" evidence="2">
    <location>
        <position position="605"/>
    </location>
    <ligand>
        <name>Zn(2+)</name>
        <dbReference type="ChEBI" id="CHEBI:29105"/>
    </ligand>
</feature>
<feature type="binding site" evidence="2">
    <location>
        <position position="609"/>
    </location>
    <ligand>
        <name>Zn(2+)</name>
        <dbReference type="ChEBI" id="CHEBI:29105"/>
    </ligand>
</feature>
<feature type="binding site" evidence="2">
    <location>
        <position position="723"/>
    </location>
    <ligand>
        <name>Zn(2+)</name>
        <dbReference type="ChEBI" id="CHEBI:29105"/>
    </ligand>
</feature>
<feature type="binding site" evidence="2">
    <location>
        <position position="727"/>
    </location>
    <ligand>
        <name>Zn(2+)</name>
        <dbReference type="ChEBI" id="CHEBI:29105"/>
    </ligand>
</feature>
<feature type="modified residue" description="N-acetylmethionine" evidence="1 2">
    <location>
        <position position="1"/>
    </location>
</feature>
<feature type="modified residue" description="Phosphoserine" evidence="1">
    <location>
        <position position="3"/>
    </location>
</feature>
<feature type="modified residue" description="N6-acetyllysine" evidence="1">
    <location>
        <position position="19"/>
    </location>
</feature>
<feature type="modified residue" description="Phosphoserine" evidence="1">
    <location>
        <position position="399"/>
    </location>
</feature>
<feature type="modified residue" description="Phosphoserine" evidence="1">
    <location>
        <position position="555"/>
    </location>
</feature>
<feature type="modified residue" description="N6-acetyllysine" evidence="1">
    <location>
        <position position="876"/>
    </location>
</feature>
<feature type="modified residue" description="N6,N6,N6-trimethyllysine; alternate" evidence="1">
    <location>
        <position position="943"/>
    </location>
</feature>
<feature type="modified residue" description="N6,N6-dimethyllysine; alternate" evidence="1">
    <location>
        <position position="943"/>
    </location>
</feature>
<feature type="modified residue" description="N6-methyllysine; alternate" evidence="1">
    <location>
        <position position="943"/>
    </location>
</feature>
<feature type="sequence conflict" description="In Ref. 2; AA sequence." evidence="3" ref="2">
    <original>G</original>
    <variation>E</variation>
    <location>
        <position position="459"/>
    </location>
</feature>
<feature type="sequence conflict" description="In Ref. 2; AA sequence." evidence="3" ref="2">
    <original>RAK</original>
    <variation>ARA</variation>
    <location>
        <begin position="474"/>
        <end position="476"/>
    </location>
</feature>
<protein>
    <recommendedName>
        <fullName evidence="2">Alanine--tRNA ligase, cytoplasmic</fullName>
        <ecNumber evidence="2">6.1.1.7</ecNumber>
    </recommendedName>
    <alternativeName>
        <fullName evidence="2">Alanyl-tRNA synthetase</fullName>
        <shortName evidence="2">AlaRS</shortName>
    </alternativeName>
    <alternativeName>
        <fullName evidence="3">Protein lactyltransferase AARS1</fullName>
        <ecNumber evidence="2">6.-.-.-</ecNumber>
    </alternativeName>
</protein>
<comment type="function">
    <text evidence="2">Catalyzes the attachment of alanine to tRNA(Ala) in a two-step reaction: alanine is first activated by ATP to form Ala-AMP and then transferred to the acceptor end of tRNA(Ala). Also edits incorrectly charged tRNA(Ala) via its editing domain. In presence of high levels of lactate, also acts as a protein lactyltransferase that mediates lactylation of lysine residues in target proteins, such as TEAD1, TP53/p53 and YAP1. Protein lactylation takes place in a two-step reaction: lactate is first activated by ATP to form lactate-AMP and then transferred to lysine residues of target proteins. Acts as an inhibitor of TP53/p53 activity by catalyzing lactylation of TP53/p53. Acts as a positive regulator of the Hippo pathway by mediating lactylation of TEAD1 and YAP1.</text>
</comment>
<comment type="catalytic activity">
    <reaction evidence="2">
        <text>tRNA(Ala) + L-alanine + ATP = L-alanyl-tRNA(Ala) + AMP + diphosphate</text>
        <dbReference type="Rhea" id="RHEA:12540"/>
        <dbReference type="Rhea" id="RHEA-COMP:9657"/>
        <dbReference type="Rhea" id="RHEA-COMP:9923"/>
        <dbReference type="ChEBI" id="CHEBI:30616"/>
        <dbReference type="ChEBI" id="CHEBI:33019"/>
        <dbReference type="ChEBI" id="CHEBI:57972"/>
        <dbReference type="ChEBI" id="CHEBI:78442"/>
        <dbReference type="ChEBI" id="CHEBI:78497"/>
        <dbReference type="ChEBI" id="CHEBI:456215"/>
        <dbReference type="EC" id="6.1.1.7"/>
    </reaction>
</comment>
<comment type="catalytic activity">
    <reaction evidence="2">
        <text>(S)-lactate + ATP + H(+) = (S)-lactoyl-AMP + diphosphate</text>
        <dbReference type="Rhea" id="RHEA:80271"/>
        <dbReference type="ChEBI" id="CHEBI:15378"/>
        <dbReference type="ChEBI" id="CHEBI:16651"/>
        <dbReference type="ChEBI" id="CHEBI:30616"/>
        <dbReference type="ChEBI" id="CHEBI:33019"/>
        <dbReference type="ChEBI" id="CHEBI:231470"/>
    </reaction>
</comment>
<comment type="catalytic activity">
    <reaction evidence="2">
        <text>(S)-lactoyl-AMP + L-lysyl-[protein] = N(6)-[(S)-lactoyl]-L-lysyl-[protein] + AMP + 2 H(+)</text>
        <dbReference type="Rhea" id="RHEA:80275"/>
        <dbReference type="Rhea" id="RHEA-COMP:9752"/>
        <dbReference type="Rhea" id="RHEA-COMP:19466"/>
        <dbReference type="ChEBI" id="CHEBI:15378"/>
        <dbReference type="ChEBI" id="CHEBI:29969"/>
        <dbReference type="ChEBI" id="CHEBI:231470"/>
        <dbReference type="ChEBI" id="CHEBI:231527"/>
        <dbReference type="ChEBI" id="CHEBI:456215"/>
    </reaction>
</comment>
<comment type="cofactor">
    <cofactor evidence="2">
        <name>Zn(2+)</name>
        <dbReference type="ChEBI" id="CHEBI:29105"/>
    </cofactor>
    <text evidence="2">Binds 1 zinc ion per subunit.</text>
</comment>
<comment type="activity regulation">
    <text evidence="1">The protein lactyltransferase activity is inhibited by beta-alanine.</text>
</comment>
<comment type="subunit">
    <text evidence="2">Monomer. Interacts with ANKRD16; the interaction is direct.</text>
</comment>
<comment type="subcellular location">
    <subcellularLocation>
        <location evidence="2">Cytoplasm</location>
    </subcellularLocation>
    <subcellularLocation>
        <location evidence="2">Nucleus</location>
    </subcellularLocation>
    <text evidence="2">Translocates to the nucleus in response to increased levels of lactate; nuclear translocation is dependent on KPNA4.</text>
</comment>
<comment type="domain">
    <text evidence="2">Consists of three domains; the N-terminal catalytic domain, the editing domain and the C-terminal C-Ala domain. The editing domain removes incorrectly charged amino acids, while the C-Ala domain, along with tRNA(Ala), serves as a bridge to cooperatively bring together the editing and aminoacylation centers thus stimulating deacylation of misacylated tRNAs.</text>
</comment>
<comment type="PTM">
    <text evidence="2">ISGylated.</text>
</comment>
<comment type="PTM">
    <text evidence="1">Methylation at 'Lys-943' by METTL21C.</text>
</comment>
<comment type="similarity">
    <text evidence="2">Belongs to the class-II aminoacyl-tRNA synthetase family.</text>
</comment>
<accession>P50475</accession>
<accession>A6IZ80</accession>
<accession>Q4G057</accession>
<evidence type="ECO:0000250" key="1">
    <source>
        <dbReference type="UniProtKB" id="P49588"/>
    </source>
</evidence>
<evidence type="ECO:0000255" key="2">
    <source>
        <dbReference type="HAMAP-Rule" id="MF_03133"/>
    </source>
</evidence>
<evidence type="ECO:0000305" key="3"/>
<organism>
    <name type="scientific">Rattus norvegicus</name>
    <name type="common">Rat</name>
    <dbReference type="NCBI Taxonomy" id="10116"/>
    <lineage>
        <taxon>Eukaryota</taxon>
        <taxon>Metazoa</taxon>
        <taxon>Chordata</taxon>
        <taxon>Craniata</taxon>
        <taxon>Vertebrata</taxon>
        <taxon>Euteleostomi</taxon>
        <taxon>Mammalia</taxon>
        <taxon>Eutheria</taxon>
        <taxon>Euarchontoglires</taxon>
        <taxon>Glires</taxon>
        <taxon>Rodentia</taxon>
        <taxon>Myomorpha</taxon>
        <taxon>Muroidea</taxon>
        <taxon>Muridae</taxon>
        <taxon>Murinae</taxon>
        <taxon>Rattus</taxon>
    </lineage>
</organism>